<proteinExistence type="inferred from homology"/>
<evidence type="ECO:0000255" key="1">
    <source>
        <dbReference type="HAMAP-Rule" id="MF_00627"/>
    </source>
</evidence>
<reference key="1">
    <citation type="journal article" date="2010" name="Genome Biol. Evol.">
        <title>Continuing evolution of Burkholderia mallei through genome reduction and large-scale rearrangements.</title>
        <authorList>
            <person name="Losada L."/>
            <person name="Ronning C.M."/>
            <person name="DeShazer D."/>
            <person name="Woods D."/>
            <person name="Fedorova N."/>
            <person name="Kim H.S."/>
            <person name="Shabalina S.A."/>
            <person name="Pearson T.R."/>
            <person name="Brinkac L."/>
            <person name="Tan P."/>
            <person name="Nandi T."/>
            <person name="Crabtree J."/>
            <person name="Badger J."/>
            <person name="Beckstrom-Sternberg S."/>
            <person name="Saqib M."/>
            <person name="Schutzer S.E."/>
            <person name="Keim P."/>
            <person name="Nierman W.C."/>
        </authorList>
    </citation>
    <scope>NUCLEOTIDE SEQUENCE [LARGE SCALE GENOMIC DNA]</scope>
    <source>
        <strain>1106a</strain>
    </source>
</reference>
<dbReference type="EC" id="1.1.1.103" evidence="1"/>
<dbReference type="EMBL" id="CP000573">
    <property type="protein sequence ID" value="ABN95617.1"/>
    <property type="molecule type" value="Genomic_DNA"/>
</dbReference>
<dbReference type="RefSeq" id="WP_004194543.1">
    <property type="nucleotide sequence ID" value="NC_009078.1"/>
</dbReference>
<dbReference type="SMR" id="A3P139"/>
<dbReference type="GeneID" id="93062068"/>
<dbReference type="KEGG" id="bpl:BURPS1106A_A0006"/>
<dbReference type="HOGENOM" id="CLU_026673_11_0_4"/>
<dbReference type="UniPathway" id="UPA00046">
    <property type="reaction ID" value="UER00505"/>
</dbReference>
<dbReference type="Proteomes" id="UP000006738">
    <property type="component" value="Chromosome II"/>
</dbReference>
<dbReference type="GO" id="GO:0005737">
    <property type="term" value="C:cytoplasm"/>
    <property type="evidence" value="ECO:0007669"/>
    <property type="project" value="UniProtKB-SubCell"/>
</dbReference>
<dbReference type="GO" id="GO:0008743">
    <property type="term" value="F:L-threonine 3-dehydrogenase activity"/>
    <property type="evidence" value="ECO:0007669"/>
    <property type="project" value="UniProtKB-UniRule"/>
</dbReference>
<dbReference type="GO" id="GO:0008270">
    <property type="term" value="F:zinc ion binding"/>
    <property type="evidence" value="ECO:0007669"/>
    <property type="project" value="UniProtKB-UniRule"/>
</dbReference>
<dbReference type="GO" id="GO:0019518">
    <property type="term" value="P:L-threonine catabolic process to glycine"/>
    <property type="evidence" value="ECO:0007669"/>
    <property type="project" value="UniProtKB-UniPathway"/>
</dbReference>
<dbReference type="Gene3D" id="3.90.180.10">
    <property type="entry name" value="Medium-chain alcohol dehydrogenases, catalytic domain"/>
    <property type="match status" value="1"/>
</dbReference>
<dbReference type="Gene3D" id="3.40.50.720">
    <property type="entry name" value="NAD(P)-binding Rossmann-like Domain"/>
    <property type="match status" value="1"/>
</dbReference>
<dbReference type="HAMAP" id="MF_00627">
    <property type="entry name" value="Thr_dehydrog"/>
    <property type="match status" value="1"/>
</dbReference>
<dbReference type="InterPro" id="IPR013149">
    <property type="entry name" value="ADH-like_C"/>
</dbReference>
<dbReference type="InterPro" id="IPR013154">
    <property type="entry name" value="ADH-like_N"/>
</dbReference>
<dbReference type="InterPro" id="IPR002328">
    <property type="entry name" value="ADH_Zn_CS"/>
</dbReference>
<dbReference type="InterPro" id="IPR011032">
    <property type="entry name" value="GroES-like_sf"/>
</dbReference>
<dbReference type="InterPro" id="IPR004627">
    <property type="entry name" value="L-Threonine_3-DHase"/>
</dbReference>
<dbReference type="InterPro" id="IPR036291">
    <property type="entry name" value="NAD(P)-bd_dom_sf"/>
</dbReference>
<dbReference type="InterPro" id="IPR020843">
    <property type="entry name" value="PKS_ER"/>
</dbReference>
<dbReference type="InterPro" id="IPR050129">
    <property type="entry name" value="Zn_alcohol_dh"/>
</dbReference>
<dbReference type="NCBIfam" id="NF003808">
    <property type="entry name" value="PRK05396.1"/>
    <property type="match status" value="1"/>
</dbReference>
<dbReference type="NCBIfam" id="TIGR00692">
    <property type="entry name" value="tdh"/>
    <property type="match status" value="1"/>
</dbReference>
<dbReference type="PANTHER" id="PTHR43401">
    <property type="entry name" value="L-THREONINE 3-DEHYDROGENASE"/>
    <property type="match status" value="1"/>
</dbReference>
<dbReference type="PANTHER" id="PTHR43401:SF2">
    <property type="entry name" value="L-THREONINE 3-DEHYDROGENASE"/>
    <property type="match status" value="1"/>
</dbReference>
<dbReference type="Pfam" id="PF08240">
    <property type="entry name" value="ADH_N"/>
    <property type="match status" value="1"/>
</dbReference>
<dbReference type="Pfam" id="PF00107">
    <property type="entry name" value="ADH_zinc_N"/>
    <property type="match status" value="1"/>
</dbReference>
<dbReference type="SMART" id="SM00829">
    <property type="entry name" value="PKS_ER"/>
    <property type="match status" value="1"/>
</dbReference>
<dbReference type="SUPFAM" id="SSF50129">
    <property type="entry name" value="GroES-like"/>
    <property type="match status" value="1"/>
</dbReference>
<dbReference type="SUPFAM" id="SSF51735">
    <property type="entry name" value="NAD(P)-binding Rossmann-fold domains"/>
    <property type="match status" value="1"/>
</dbReference>
<dbReference type="PROSITE" id="PS00059">
    <property type="entry name" value="ADH_ZINC"/>
    <property type="match status" value="1"/>
</dbReference>
<comment type="function">
    <text evidence="1">Catalyzes the NAD(+)-dependent oxidation of L-threonine to 2-amino-3-ketobutyrate.</text>
</comment>
<comment type="catalytic activity">
    <reaction evidence="1">
        <text>L-threonine + NAD(+) = (2S)-2-amino-3-oxobutanoate + NADH + H(+)</text>
        <dbReference type="Rhea" id="RHEA:13161"/>
        <dbReference type="ChEBI" id="CHEBI:15378"/>
        <dbReference type="ChEBI" id="CHEBI:57540"/>
        <dbReference type="ChEBI" id="CHEBI:57926"/>
        <dbReference type="ChEBI" id="CHEBI:57945"/>
        <dbReference type="ChEBI" id="CHEBI:78948"/>
        <dbReference type="EC" id="1.1.1.103"/>
    </reaction>
</comment>
<comment type="cofactor">
    <cofactor evidence="1">
        <name>Zn(2+)</name>
        <dbReference type="ChEBI" id="CHEBI:29105"/>
    </cofactor>
    <text evidence="1">Binds 2 Zn(2+) ions per subunit.</text>
</comment>
<comment type="pathway">
    <text evidence="1">Amino-acid degradation; L-threonine degradation via oxydo-reductase pathway; glycine from L-threonine: step 1/2.</text>
</comment>
<comment type="subunit">
    <text evidence="1">Homotetramer.</text>
</comment>
<comment type="subcellular location">
    <subcellularLocation>
        <location evidence="1">Cytoplasm</location>
    </subcellularLocation>
</comment>
<comment type="similarity">
    <text evidence="1">Belongs to the zinc-containing alcohol dehydrogenase family.</text>
</comment>
<feature type="chain" id="PRO_1000051623" description="L-threonine 3-dehydrogenase">
    <location>
        <begin position="1"/>
        <end position="343"/>
    </location>
</feature>
<feature type="active site" description="Charge relay system" evidence="1">
    <location>
        <position position="40"/>
    </location>
</feature>
<feature type="active site" description="Charge relay system" evidence="1">
    <location>
        <position position="43"/>
    </location>
</feature>
<feature type="binding site" evidence="1">
    <location>
        <position position="38"/>
    </location>
    <ligand>
        <name>Zn(2+)</name>
        <dbReference type="ChEBI" id="CHEBI:29105"/>
        <label>1</label>
        <note>catalytic</note>
    </ligand>
</feature>
<feature type="binding site" evidence="1">
    <location>
        <position position="63"/>
    </location>
    <ligand>
        <name>Zn(2+)</name>
        <dbReference type="ChEBI" id="CHEBI:29105"/>
        <label>1</label>
        <note>catalytic</note>
    </ligand>
</feature>
<feature type="binding site" evidence="1">
    <location>
        <position position="64"/>
    </location>
    <ligand>
        <name>Zn(2+)</name>
        <dbReference type="ChEBI" id="CHEBI:29105"/>
        <label>1</label>
        <note>catalytic</note>
    </ligand>
</feature>
<feature type="binding site" evidence="1">
    <location>
        <position position="93"/>
    </location>
    <ligand>
        <name>Zn(2+)</name>
        <dbReference type="ChEBI" id="CHEBI:29105"/>
        <label>2</label>
    </ligand>
</feature>
<feature type="binding site" evidence="1">
    <location>
        <position position="96"/>
    </location>
    <ligand>
        <name>Zn(2+)</name>
        <dbReference type="ChEBI" id="CHEBI:29105"/>
        <label>2</label>
    </ligand>
</feature>
<feature type="binding site" evidence="1">
    <location>
        <position position="99"/>
    </location>
    <ligand>
        <name>Zn(2+)</name>
        <dbReference type="ChEBI" id="CHEBI:29105"/>
        <label>2</label>
    </ligand>
</feature>
<feature type="binding site" evidence="1">
    <location>
        <position position="107"/>
    </location>
    <ligand>
        <name>Zn(2+)</name>
        <dbReference type="ChEBI" id="CHEBI:29105"/>
        <label>2</label>
    </ligand>
</feature>
<feature type="binding site" evidence="1">
    <location>
        <position position="175"/>
    </location>
    <ligand>
        <name>NAD(+)</name>
        <dbReference type="ChEBI" id="CHEBI:57540"/>
    </ligand>
</feature>
<feature type="binding site" evidence="1">
    <location>
        <position position="195"/>
    </location>
    <ligand>
        <name>NAD(+)</name>
        <dbReference type="ChEBI" id="CHEBI:57540"/>
    </ligand>
</feature>
<feature type="binding site" evidence="1">
    <location>
        <position position="200"/>
    </location>
    <ligand>
        <name>NAD(+)</name>
        <dbReference type="ChEBI" id="CHEBI:57540"/>
    </ligand>
</feature>
<feature type="binding site" evidence="1">
    <location>
        <begin position="262"/>
        <end position="264"/>
    </location>
    <ligand>
        <name>NAD(+)</name>
        <dbReference type="ChEBI" id="CHEBI:57540"/>
    </ligand>
</feature>
<feature type="binding site" evidence="1">
    <location>
        <begin position="286"/>
        <end position="287"/>
    </location>
    <ligand>
        <name>NAD(+)</name>
        <dbReference type="ChEBI" id="CHEBI:57540"/>
    </ligand>
</feature>
<feature type="site" description="Important for catalytic activity for the proton relay mechanism but does not participate directly in the coordination of zinc atom" evidence="1">
    <location>
        <position position="148"/>
    </location>
</feature>
<keyword id="KW-0963">Cytoplasm</keyword>
<keyword id="KW-0479">Metal-binding</keyword>
<keyword id="KW-0520">NAD</keyword>
<keyword id="KW-0560">Oxidoreductase</keyword>
<keyword id="KW-0862">Zinc</keyword>
<sequence>MKALAKLERGPGLTLTRVKKPEVGHNDVLIKIRRTAICGTDIHIWKWDDWAQKTIPVPMHVGHEYVGEIVEMGQEVRGFSIGDRVSGEGHITCGFCRNCRAGRRHLCRNTVGVGVNREGAFAEYLAIPAFNAFKIPPEISDDLAAIFDPFGNATHTALSFNLVGEDVLITGAGPIGVMAVAIAKHVGARNVVITDINDYRLELARKMGATRAVNVSRESLRDVMADLHMTEGFDVGLEMSGVPSAFTSLLESMNHGGKVALLGIPPAQTAIDWNQVIFKGLEIKGIYGREMFETWYKMVAMLQSGLDLSPIITHRFAVDDYEKGFAAMLSGESGKVILDWADA</sequence>
<gene>
    <name evidence="1" type="primary">tdh</name>
    <name type="ordered locus">BURPS1106A_A0006</name>
</gene>
<accession>A3P139</accession>
<organism>
    <name type="scientific">Burkholderia pseudomallei (strain 1106a)</name>
    <dbReference type="NCBI Taxonomy" id="357348"/>
    <lineage>
        <taxon>Bacteria</taxon>
        <taxon>Pseudomonadati</taxon>
        <taxon>Pseudomonadota</taxon>
        <taxon>Betaproteobacteria</taxon>
        <taxon>Burkholderiales</taxon>
        <taxon>Burkholderiaceae</taxon>
        <taxon>Burkholderia</taxon>
        <taxon>pseudomallei group</taxon>
    </lineage>
</organism>
<name>TDH_BURP0</name>
<protein>
    <recommendedName>
        <fullName evidence="1">L-threonine 3-dehydrogenase</fullName>
        <shortName evidence="1">TDH</shortName>
        <ecNumber evidence="1">1.1.1.103</ecNumber>
    </recommendedName>
</protein>